<name>MDTA_SALPC</name>
<protein>
    <recommendedName>
        <fullName evidence="1">Multidrug resistance protein MdtA</fullName>
    </recommendedName>
    <alternativeName>
        <fullName evidence="1">Multidrug transporter MdtA</fullName>
    </alternativeName>
</protein>
<keyword id="KW-0997">Cell inner membrane</keyword>
<keyword id="KW-1003">Cell membrane</keyword>
<keyword id="KW-0472">Membrane</keyword>
<keyword id="KW-0677">Repeat</keyword>
<keyword id="KW-0732">Signal</keyword>
<keyword id="KW-0813">Transport</keyword>
<sequence>MKGSNTFRWAIAIGVVVAAAAFWFWHSRSESPTAAPGVAAQAPHTAAAGRRGMRDGPLAPVQAATATTQAVPRYLSGLGTVTAANTVTVRSRVDGQLIALHFQEGQQVNAGDLLAQIDPSQFKVALAQAQGQLAKDNATLANARRDLARYQQLAKTNLVSRQELDAQQALVNETQGTIKADEANVASAQLQLDWSRITAPVSGRVGLKQVDVGNQISSSDTAGIVVITQTHPIDLIFTLPESDIATVVQAQKAGKTLVVEAWDRTNSHKLSEGVLLSLDNQIDPTTGTIKIKARFTNQDDTLFPNQFVNARMLVDTEQNAVVVPAAAVQMGNEGHFVWVLNDENNVSKKRVKIGIQDNRNVVISAGLSAGDRVVTDGIDRLTEGAKVEVVEPQTTMADEKSPSRHEGQKGARA</sequence>
<accession>C0Q1F4</accession>
<gene>
    <name evidence="1" type="primary">mdtA</name>
    <name type="ordered locus">SPC_1592</name>
</gene>
<organism>
    <name type="scientific">Salmonella paratyphi C (strain RKS4594)</name>
    <dbReference type="NCBI Taxonomy" id="476213"/>
    <lineage>
        <taxon>Bacteria</taxon>
        <taxon>Pseudomonadati</taxon>
        <taxon>Pseudomonadota</taxon>
        <taxon>Gammaproteobacteria</taxon>
        <taxon>Enterobacterales</taxon>
        <taxon>Enterobacteriaceae</taxon>
        <taxon>Salmonella</taxon>
    </lineage>
</organism>
<feature type="signal peptide" evidence="1">
    <location>
        <begin position="1"/>
        <end position="20"/>
    </location>
</feature>
<feature type="chain" id="PRO_1000184862" description="Multidrug resistance protein MdtA">
    <location>
        <begin position="21"/>
        <end position="413"/>
    </location>
</feature>
<feature type="region of interest" description="Disordered" evidence="2">
    <location>
        <begin position="31"/>
        <end position="57"/>
    </location>
</feature>
<feature type="region of interest" description="Disordered" evidence="2">
    <location>
        <begin position="391"/>
        <end position="413"/>
    </location>
</feature>
<feature type="compositionally biased region" description="Basic and acidic residues" evidence="2">
    <location>
        <begin position="397"/>
        <end position="413"/>
    </location>
</feature>
<dbReference type="EMBL" id="CP000857">
    <property type="protein sequence ID" value="ACN45740.1"/>
    <property type="molecule type" value="Genomic_DNA"/>
</dbReference>
<dbReference type="RefSeq" id="WP_000678815.1">
    <property type="nucleotide sequence ID" value="NC_012125.1"/>
</dbReference>
<dbReference type="SMR" id="C0Q1F4"/>
<dbReference type="KEGG" id="sei:SPC_1592"/>
<dbReference type="HOGENOM" id="CLU_018816_2_0_6"/>
<dbReference type="Proteomes" id="UP000001599">
    <property type="component" value="Chromosome"/>
</dbReference>
<dbReference type="GO" id="GO:1990281">
    <property type="term" value="C:efflux pump complex"/>
    <property type="evidence" value="ECO:0007669"/>
    <property type="project" value="TreeGrafter"/>
</dbReference>
<dbReference type="GO" id="GO:0005886">
    <property type="term" value="C:plasma membrane"/>
    <property type="evidence" value="ECO:0007669"/>
    <property type="project" value="UniProtKB-SubCell"/>
</dbReference>
<dbReference type="GO" id="GO:0015562">
    <property type="term" value="F:efflux transmembrane transporter activity"/>
    <property type="evidence" value="ECO:0007669"/>
    <property type="project" value="TreeGrafter"/>
</dbReference>
<dbReference type="FunFam" id="2.40.420.20:FF:000001">
    <property type="entry name" value="Efflux RND transporter periplasmic adaptor subunit"/>
    <property type="match status" value="1"/>
</dbReference>
<dbReference type="FunFam" id="1.10.287.470:FF:000005">
    <property type="entry name" value="Multidrug resistance protein MdtA"/>
    <property type="match status" value="1"/>
</dbReference>
<dbReference type="FunFam" id="2.40.30.170:FF:000006">
    <property type="entry name" value="Multidrug resistance protein MdtA"/>
    <property type="match status" value="1"/>
</dbReference>
<dbReference type="Gene3D" id="2.40.30.170">
    <property type="match status" value="1"/>
</dbReference>
<dbReference type="Gene3D" id="2.40.420.20">
    <property type="match status" value="1"/>
</dbReference>
<dbReference type="Gene3D" id="2.40.50.100">
    <property type="match status" value="1"/>
</dbReference>
<dbReference type="Gene3D" id="1.10.287.470">
    <property type="entry name" value="Helix hairpin bin"/>
    <property type="match status" value="1"/>
</dbReference>
<dbReference type="HAMAP" id="MF_01422">
    <property type="entry name" value="MdtA"/>
    <property type="match status" value="1"/>
</dbReference>
<dbReference type="InterPro" id="IPR032317">
    <property type="entry name" value="CusB_D23"/>
</dbReference>
<dbReference type="InterPro" id="IPR022824">
    <property type="entry name" value="Multidrug-R_MdtA"/>
</dbReference>
<dbReference type="InterPro" id="IPR006143">
    <property type="entry name" value="RND_pump_MFP"/>
</dbReference>
<dbReference type="NCBIfam" id="NF008589">
    <property type="entry name" value="PRK11556.1"/>
    <property type="match status" value="1"/>
</dbReference>
<dbReference type="NCBIfam" id="TIGR01730">
    <property type="entry name" value="RND_mfp"/>
    <property type="match status" value="1"/>
</dbReference>
<dbReference type="PANTHER" id="PTHR30469">
    <property type="entry name" value="MULTIDRUG RESISTANCE PROTEIN MDTA"/>
    <property type="match status" value="1"/>
</dbReference>
<dbReference type="PANTHER" id="PTHR30469:SF12">
    <property type="entry name" value="MULTIDRUG RESISTANCE PROTEIN MDTA"/>
    <property type="match status" value="1"/>
</dbReference>
<dbReference type="Pfam" id="PF16576">
    <property type="entry name" value="HlyD_D23"/>
    <property type="match status" value="1"/>
</dbReference>
<dbReference type="SUPFAM" id="SSF111369">
    <property type="entry name" value="HlyD-like secretion proteins"/>
    <property type="match status" value="1"/>
</dbReference>
<evidence type="ECO:0000255" key="1">
    <source>
        <dbReference type="HAMAP-Rule" id="MF_01422"/>
    </source>
</evidence>
<evidence type="ECO:0000256" key="2">
    <source>
        <dbReference type="SAM" id="MobiDB-lite"/>
    </source>
</evidence>
<proteinExistence type="inferred from homology"/>
<reference key="1">
    <citation type="journal article" date="2009" name="PLoS ONE">
        <title>Salmonella paratyphi C: genetic divergence from Salmonella choleraesuis and pathogenic convergence with Salmonella typhi.</title>
        <authorList>
            <person name="Liu W.-Q."/>
            <person name="Feng Y."/>
            <person name="Wang Y."/>
            <person name="Zou Q.-H."/>
            <person name="Chen F."/>
            <person name="Guo J.-T."/>
            <person name="Peng Y.-H."/>
            <person name="Jin Y."/>
            <person name="Li Y.-G."/>
            <person name="Hu S.-N."/>
            <person name="Johnston R.N."/>
            <person name="Liu G.-R."/>
            <person name="Liu S.-L."/>
        </authorList>
    </citation>
    <scope>NUCLEOTIDE SEQUENCE [LARGE SCALE GENOMIC DNA]</scope>
    <source>
        <strain>RKS4594</strain>
    </source>
</reference>
<comment type="subunit">
    <text evidence="1">Part of a tripartite efflux system composed of MdtA, MdtB and MdtC.</text>
</comment>
<comment type="subcellular location">
    <subcellularLocation>
        <location evidence="1">Cell inner membrane</location>
        <topology evidence="1">Peripheral membrane protein</topology>
    </subcellularLocation>
</comment>
<comment type="similarity">
    <text evidence="1">Belongs to the membrane fusion protein (MFP) (TC 8.A.1) family.</text>
</comment>